<organism>
    <name type="scientific">Escherichia coli O157:H7</name>
    <dbReference type="NCBI Taxonomy" id="83334"/>
    <lineage>
        <taxon>Bacteria</taxon>
        <taxon>Pseudomonadati</taxon>
        <taxon>Pseudomonadota</taxon>
        <taxon>Gammaproteobacteria</taxon>
        <taxon>Enterobacterales</taxon>
        <taxon>Enterobacteriaceae</taxon>
        <taxon>Escherichia</taxon>
    </lineage>
</organism>
<evidence type="ECO:0000250" key="1"/>
<evidence type="ECO:0000255" key="2">
    <source>
        <dbReference type="PROSITE-ProRule" id="PRU00182"/>
    </source>
</evidence>
<evidence type="ECO:0000256" key="3">
    <source>
        <dbReference type="SAM" id="MobiDB-lite"/>
    </source>
</evidence>
<evidence type="ECO:0000305" key="4"/>
<accession>P0ACH0</accession>
<accession>P45802</accession>
<name>HSLR_ECO57</name>
<dbReference type="EMBL" id="AE005174">
    <property type="protein sequence ID" value="AAG58500.1"/>
    <property type="molecule type" value="Genomic_DNA"/>
</dbReference>
<dbReference type="EMBL" id="BA000007">
    <property type="protein sequence ID" value="BAB37665.1"/>
    <property type="molecule type" value="Genomic_DNA"/>
</dbReference>
<dbReference type="PIR" id="B91159">
    <property type="entry name" value="B91159"/>
</dbReference>
<dbReference type="PIR" id="H86004">
    <property type="entry name" value="H86004"/>
</dbReference>
<dbReference type="RefSeq" id="NP_312269.1">
    <property type="nucleotide sequence ID" value="NC_002695.1"/>
</dbReference>
<dbReference type="RefSeq" id="WP_000660483.1">
    <property type="nucleotide sequence ID" value="NZ_VOAI01000004.1"/>
</dbReference>
<dbReference type="SMR" id="P0ACH0"/>
<dbReference type="STRING" id="155864.Z4754"/>
<dbReference type="GeneID" id="915903"/>
<dbReference type="GeneID" id="93778598"/>
<dbReference type="KEGG" id="ece:Z4754"/>
<dbReference type="KEGG" id="ecs:ECs_4242"/>
<dbReference type="PATRIC" id="fig|386585.9.peg.4429"/>
<dbReference type="eggNOG" id="COG1188">
    <property type="taxonomic scope" value="Bacteria"/>
</dbReference>
<dbReference type="HOGENOM" id="CLU_101003_2_1_6"/>
<dbReference type="OMA" id="IDKYLWC"/>
<dbReference type="Proteomes" id="UP000000558">
    <property type="component" value="Chromosome"/>
</dbReference>
<dbReference type="Proteomes" id="UP000002519">
    <property type="component" value="Chromosome"/>
</dbReference>
<dbReference type="GO" id="GO:0003677">
    <property type="term" value="F:DNA binding"/>
    <property type="evidence" value="ECO:0007669"/>
    <property type="project" value="UniProtKB-KW"/>
</dbReference>
<dbReference type="GO" id="GO:0043023">
    <property type="term" value="F:ribosomal large subunit binding"/>
    <property type="evidence" value="ECO:0007669"/>
    <property type="project" value="InterPro"/>
</dbReference>
<dbReference type="GO" id="GO:0003727">
    <property type="term" value="F:single-stranded RNA binding"/>
    <property type="evidence" value="ECO:0007669"/>
    <property type="project" value="InterPro"/>
</dbReference>
<dbReference type="GO" id="GO:0034605">
    <property type="term" value="P:cellular response to heat"/>
    <property type="evidence" value="ECO:0007669"/>
    <property type="project" value="InterPro"/>
</dbReference>
<dbReference type="CDD" id="cd00165">
    <property type="entry name" value="S4"/>
    <property type="match status" value="1"/>
</dbReference>
<dbReference type="FunFam" id="3.10.290.10:FF:000008">
    <property type="entry name" value="Heat shock protein 15"/>
    <property type="match status" value="1"/>
</dbReference>
<dbReference type="Gene3D" id="3.10.290.10">
    <property type="entry name" value="RNA-binding S4 domain"/>
    <property type="match status" value="1"/>
</dbReference>
<dbReference type="InterPro" id="IPR025708">
    <property type="entry name" value="HSP15"/>
</dbReference>
<dbReference type="InterPro" id="IPR002942">
    <property type="entry name" value="S4_RNA-bd"/>
</dbReference>
<dbReference type="InterPro" id="IPR036986">
    <property type="entry name" value="S4_RNA-bd_sf"/>
</dbReference>
<dbReference type="NCBIfam" id="NF007673">
    <property type="entry name" value="PRK10348.1"/>
    <property type="match status" value="1"/>
</dbReference>
<dbReference type="Pfam" id="PF01479">
    <property type="entry name" value="S4"/>
    <property type="match status" value="1"/>
</dbReference>
<dbReference type="PIRSF" id="PIRSF016821">
    <property type="entry name" value="HSP15"/>
    <property type="match status" value="1"/>
</dbReference>
<dbReference type="SMART" id="SM00363">
    <property type="entry name" value="S4"/>
    <property type="match status" value="1"/>
</dbReference>
<dbReference type="SUPFAM" id="SSF55174">
    <property type="entry name" value="Alpha-L RNA-binding motif"/>
    <property type="match status" value="1"/>
</dbReference>
<dbReference type="PROSITE" id="PS50889">
    <property type="entry name" value="S4"/>
    <property type="match status" value="1"/>
</dbReference>
<reference key="1">
    <citation type="journal article" date="2001" name="Nature">
        <title>Genome sequence of enterohaemorrhagic Escherichia coli O157:H7.</title>
        <authorList>
            <person name="Perna N.T."/>
            <person name="Plunkett G. III"/>
            <person name="Burland V."/>
            <person name="Mau B."/>
            <person name="Glasner J.D."/>
            <person name="Rose D.J."/>
            <person name="Mayhew G.F."/>
            <person name="Evans P.S."/>
            <person name="Gregor J."/>
            <person name="Kirkpatrick H.A."/>
            <person name="Posfai G."/>
            <person name="Hackett J."/>
            <person name="Klink S."/>
            <person name="Boutin A."/>
            <person name="Shao Y."/>
            <person name="Miller L."/>
            <person name="Grotbeck E.J."/>
            <person name="Davis N.W."/>
            <person name="Lim A."/>
            <person name="Dimalanta E.T."/>
            <person name="Potamousis K."/>
            <person name="Apodaca J."/>
            <person name="Anantharaman T.S."/>
            <person name="Lin J."/>
            <person name="Yen G."/>
            <person name="Schwartz D.C."/>
            <person name="Welch R.A."/>
            <person name="Blattner F.R."/>
        </authorList>
    </citation>
    <scope>NUCLEOTIDE SEQUENCE [LARGE SCALE GENOMIC DNA]</scope>
    <source>
        <strain>O157:H7 / EDL933 / ATCC 700927 / EHEC</strain>
    </source>
</reference>
<reference key="2">
    <citation type="journal article" date="2001" name="DNA Res.">
        <title>Complete genome sequence of enterohemorrhagic Escherichia coli O157:H7 and genomic comparison with a laboratory strain K-12.</title>
        <authorList>
            <person name="Hayashi T."/>
            <person name="Makino K."/>
            <person name="Ohnishi M."/>
            <person name="Kurokawa K."/>
            <person name="Ishii K."/>
            <person name="Yokoyama K."/>
            <person name="Han C.-G."/>
            <person name="Ohtsubo E."/>
            <person name="Nakayama K."/>
            <person name="Murata T."/>
            <person name="Tanaka M."/>
            <person name="Tobe T."/>
            <person name="Iida T."/>
            <person name="Takami H."/>
            <person name="Honda T."/>
            <person name="Sasakawa C."/>
            <person name="Ogasawara N."/>
            <person name="Yasunaga T."/>
            <person name="Kuhara S."/>
            <person name="Shiba T."/>
            <person name="Hattori M."/>
            <person name="Shinagawa H."/>
        </authorList>
    </citation>
    <scope>NUCLEOTIDE SEQUENCE [LARGE SCALE GENOMIC DNA]</scope>
    <source>
        <strain>O157:H7 / Sakai / RIMD 0509952 / EHEC</strain>
    </source>
</reference>
<keyword id="KW-0238">DNA-binding</keyword>
<keyword id="KW-1185">Reference proteome</keyword>
<keyword id="KW-0694">RNA-binding</keyword>
<keyword id="KW-0346">Stress response</keyword>
<protein>
    <recommendedName>
        <fullName>Heat shock protein 15</fullName>
        <shortName>HSP15</shortName>
    </recommendedName>
</protein>
<gene>
    <name type="primary">hslR</name>
    <name type="ordered locus">Z4754</name>
    <name type="ordered locus">ECs4242</name>
</gene>
<feature type="chain" id="PRO_0000201742" description="Heat shock protein 15">
    <location>
        <begin position="1"/>
        <end position="133"/>
    </location>
</feature>
<feature type="domain" description="S4 RNA-binding" evidence="2">
    <location>
        <begin position="9"/>
        <end position="71"/>
    </location>
</feature>
<feature type="region of interest" description="Disordered" evidence="3">
    <location>
        <begin position="105"/>
        <end position="133"/>
    </location>
</feature>
<feature type="compositionally biased region" description="Basic and acidic residues" evidence="3">
    <location>
        <begin position="111"/>
        <end position="133"/>
    </location>
</feature>
<sequence length="133" mass="15496">MKEKPAVEVRLDKWLWAARFYKTRALAREMIEGGKVHYNGQRSKPSKIVELNATLTLRQGNDERTVIVKAITEQRRPASEAALLYEETAESVEKREKMALARKLNALTMPHPDRRPDKKERRDLLRFKHGDSE</sequence>
<proteinExistence type="inferred from homology"/>
<comment type="function">
    <text evidence="1">Involved in the recycling of free 50S ribosomal subunits that still carry a nascent chain. Binds RNA more specifically than DNA. Binds with very high affinity to the free 50S ribosomal subunit. Does not bind it when it is part of the 70S ribosome (By similarity).</text>
</comment>
<comment type="subunit">
    <text evidence="1">Monomer.</text>
</comment>
<comment type="induction">
    <text evidence="1">By heat shock.</text>
</comment>
<comment type="similarity">
    <text evidence="4">Belongs to the HSP15 family.</text>
</comment>